<organism>
    <name type="scientific">Saccharomyces cerevisiae (strain ATCC 204508 / S288c)</name>
    <name type="common">Baker's yeast</name>
    <dbReference type="NCBI Taxonomy" id="559292"/>
    <lineage>
        <taxon>Eukaryota</taxon>
        <taxon>Fungi</taxon>
        <taxon>Dikarya</taxon>
        <taxon>Ascomycota</taxon>
        <taxon>Saccharomycotina</taxon>
        <taxon>Saccharomycetes</taxon>
        <taxon>Saccharomycetales</taxon>
        <taxon>Saccharomycetaceae</taxon>
        <taxon>Saccharomyces</taxon>
    </lineage>
</organism>
<proteinExistence type="predicted"/>
<gene>
    <name type="ordered locus">YJR115W</name>
    <name type="ORF">J2027</name>
</gene>
<reference key="1">
    <citation type="journal article" date="1996" name="EMBO J.">
        <title>Complete nucleotide sequence of Saccharomyces cerevisiae chromosome X.</title>
        <authorList>
            <person name="Galibert F."/>
            <person name="Alexandraki D."/>
            <person name="Baur A."/>
            <person name="Boles E."/>
            <person name="Chalwatzis N."/>
            <person name="Chuat J.-C."/>
            <person name="Coster F."/>
            <person name="Cziepluch C."/>
            <person name="de Haan M."/>
            <person name="Domdey H."/>
            <person name="Durand P."/>
            <person name="Entian K.-D."/>
            <person name="Gatius M."/>
            <person name="Goffeau A."/>
            <person name="Grivell L.A."/>
            <person name="Hennemann A."/>
            <person name="Herbert C.J."/>
            <person name="Heumann K."/>
            <person name="Hilger F."/>
            <person name="Hollenberg C.P."/>
            <person name="Huang M.-E."/>
            <person name="Jacq C."/>
            <person name="Jauniaux J.-C."/>
            <person name="Katsoulou C."/>
            <person name="Kirchrath L."/>
            <person name="Kleine K."/>
            <person name="Kordes E."/>
            <person name="Koetter P."/>
            <person name="Liebl S."/>
            <person name="Louis E.J."/>
            <person name="Manus V."/>
            <person name="Mewes H.-W."/>
            <person name="Miosga T."/>
            <person name="Obermaier B."/>
            <person name="Perea J."/>
            <person name="Pohl T.M."/>
            <person name="Portetelle D."/>
            <person name="Pujol A."/>
            <person name="Purnelle B."/>
            <person name="Ramezani Rad M."/>
            <person name="Rasmussen S.W."/>
            <person name="Rose M."/>
            <person name="Rossau R."/>
            <person name="Schaaff-Gerstenschlaeger I."/>
            <person name="Smits P.H.M."/>
            <person name="Scarcez T."/>
            <person name="Soriano N."/>
            <person name="To Van D."/>
            <person name="Tzermia M."/>
            <person name="Van Broekhoven A."/>
            <person name="Vandenbol M."/>
            <person name="Wedler H."/>
            <person name="von Wettstein D."/>
            <person name="Wambutt R."/>
            <person name="Zagulski M."/>
            <person name="Zollner A."/>
            <person name="Karpfinger-Hartl L."/>
        </authorList>
    </citation>
    <scope>NUCLEOTIDE SEQUENCE [LARGE SCALE GENOMIC DNA]</scope>
    <source>
        <strain>ATCC 204508 / S288c</strain>
    </source>
</reference>
<reference key="2">
    <citation type="journal article" date="2014" name="G3 (Bethesda)">
        <title>The reference genome sequence of Saccharomyces cerevisiae: Then and now.</title>
        <authorList>
            <person name="Engel S.R."/>
            <person name="Dietrich F.S."/>
            <person name="Fisk D.G."/>
            <person name="Binkley G."/>
            <person name="Balakrishnan R."/>
            <person name="Costanzo M.C."/>
            <person name="Dwight S.S."/>
            <person name="Hitz B.C."/>
            <person name="Karra K."/>
            <person name="Nash R.S."/>
            <person name="Weng S."/>
            <person name="Wong E.D."/>
            <person name="Lloyd P."/>
            <person name="Skrzypek M.S."/>
            <person name="Miyasato S.R."/>
            <person name="Simison M."/>
            <person name="Cherry J.M."/>
        </authorList>
    </citation>
    <scope>GENOME REANNOTATION</scope>
    <source>
        <strain>ATCC 204508 / S288c</strain>
    </source>
</reference>
<feature type="chain" id="PRO_0000203114" description="Uncharacterized protein YJR115W">
    <location>
        <begin position="1"/>
        <end position="169"/>
    </location>
</feature>
<feature type="region of interest" description="Disordered" evidence="1">
    <location>
        <begin position="144"/>
        <end position="169"/>
    </location>
</feature>
<feature type="compositionally biased region" description="Low complexity" evidence="1">
    <location>
        <begin position="144"/>
        <end position="157"/>
    </location>
</feature>
<feature type="compositionally biased region" description="Polar residues" evidence="1">
    <location>
        <begin position="158"/>
        <end position="169"/>
    </location>
</feature>
<sequence length="169" mass="19049">MFTNTRTILIYNSKVMNTHTHTHTHTHTHIYIYTGDQVSVRGRLLSLKFFKVLKLFFPSPTSLATSHPPLSSMSPYMTIPQQYLYISKIRSKLSQCALTRHHHRELDLRKMVGHANMLDRILDEIDEIDSEVVLCDAADGSSTAEAHSASPASSDSSPLTNNIRPISIM</sequence>
<name>YJ85_YEAST</name>
<protein>
    <recommendedName>
        <fullName>Uncharacterized protein YJR115W</fullName>
    </recommendedName>
</protein>
<evidence type="ECO:0000256" key="1">
    <source>
        <dbReference type="SAM" id="MobiDB-lite"/>
    </source>
</evidence>
<dbReference type="EMBL" id="Z49615">
    <property type="protein sequence ID" value="CAA89645.1"/>
    <property type="molecule type" value="Genomic_DNA"/>
</dbReference>
<dbReference type="EMBL" id="BK006943">
    <property type="protein sequence ID" value="DAA08900.1"/>
    <property type="molecule type" value="Genomic_DNA"/>
</dbReference>
<dbReference type="PIR" id="S57138">
    <property type="entry name" value="S57138"/>
</dbReference>
<dbReference type="RefSeq" id="NP_012649.3">
    <property type="nucleotide sequence ID" value="NM_001181773.3"/>
</dbReference>
<dbReference type="BioGRID" id="33871">
    <property type="interactions" value="63"/>
</dbReference>
<dbReference type="DIP" id="DIP-2931N"/>
<dbReference type="FunCoup" id="P47152">
    <property type="interactions" value="67"/>
</dbReference>
<dbReference type="IntAct" id="P47152">
    <property type="interactions" value="6"/>
</dbReference>
<dbReference type="MINT" id="P47152"/>
<dbReference type="STRING" id="4932.YJR115W"/>
<dbReference type="PaxDb" id="4932-YJR115W"/>
<dbReference type="EnsemblFungi" id="YJR115W_mRNA">
    <property type="protein sequence ID" value="YJR115W"/>
    <property type="gene ID" value="YJR115W"/>
</dbReference>
<dbReference type="GeneID" id="853579"/>
<dbReference type="KEGG" id="sce:YJR115W"/>
<dbReference type="AGR" id="SGD:S000003876"/>
<dbReference type="SGD" id="S000003876">
    <property type="gene designation" value="YJR115W"/>
</dbReference>
<dbReference type="VEuPathDB" id="FungiDB:YJR115W"/>
<dbReference type="HOGENOM" id="CLU_1579730_0_0_1"/>
<dbReference type="InParanoid" id="P47152"/>
<dbReference type="OrthoDB" id="5431245at2759"/>
<dbReference type="BioCyc" id="YEAST:G3O-31737-MONOMER"/>
<dbReference type="BioGRID-ORCS" id="853579">
    <property type="hits" value="2 hits in 10 CRISPR screens"/>
</dbReference>
<dbReference type="PRO" id="PR:P47152"/>
<dbReference type="Proteomes" id="UP000002311">
    <property type="component" value="Chromosome X"/>
</dbReference>
<dbReference type="RNAct" id="P47152">
    <property type="molecule type" value="protein"/>
</dbReference>
<dbReference type="InterPro" id="IPR037738">
    <property type="entry name" value="Ecm13-like"/>
</dbReference>
<dbReference type="PANTHER" id="PTHR36826">
    <property type="entry name" value="PROTEIN ECM13"/>
    <property type="match status" value="1"/>
</dbReference>
<dbReference type="PANTHER" id="PTHR36826:SF1">
    <property type="entry name" value="PROTEIN ECM13"/>
    <property type="match status" value="1"/>
</dbReference>
<keyword id="KW-1185">Reference proteome</keyword>
<accession>P47152</accession>
<accession>D6VWT4</accession>